<comment type="function">
    <text evidence="1">One of two assembly initiator proteins, it binds directly to the 5'-end of the 23S rRNA, where it nucleates assembly of the 50S subunit.</text>
</comment>
<comment type="function">
    <text evidence="1">One of the proteins that surrounds the polypeptide exit tunnel on the outside of the subunit.</text>
</comment>
<comment type="subunit">
    <text evidence="1">Part of the 50S ribosomal subunit.</text>
</comment>
<comment type="similarity">
    <text evidence="1">Belongs to the universal ribosomal protein uL24 family.</text>
</comment>
<name>RL24_STAEQ</name>
<accession>Q5HM10</accession>
<sequence length="105" mass="11444">MHIKKGDNVKVIAGKDKGKEGKVVATEPKKDRVVVEGVNVIKKHQKPTQLNPEGGILETEAAIHVSNVQLLDPKTNEPTRVGYKTVDGKKVRIAKKSGEEIKANN</sequence>
<organism>
    <name type="scientific">Staphylococcus epidermidis (strain ATCC 35984 / DSM 28319 / BCRC 17069 / CCUG 31568 / BM 3577 / RP62A)</name>
    <dbReference type="NCBI Taxonomy" id="176279"/>
    <lineage>
        <taxon>Bacteria</taxon>
        <taxon>Bacillati</taxon>
        <taxon>Bacillota</taxon>
        <taxon>Bacilli</taxon>
        <taxon>Bacillales</taxon>
        <taxon>Staphylococcaceae</taxon>
        <taxon>Staphylococcus</taxon>
    </lineage>
</organism>
<dbReference type="EMBL" id="CP000029">
    <property type="protein sequence ID" value="AAW55144.1"/>
    <property type="molecule type" value="Genomic_DNA"/>
</dbReference>
<dbReference type="RefSeq" id="WP_002447331.1">
    <property type="nucleotide sequence ID" value="NC_002976.3"/>
</dbReference>
<dbReference type="SMR" id="Q5HM10"/>
<dbReference type="STRING" id="176279.SERP1820"/>
<dbReference type="KEGG" id="ser:SERP1820"/>
<dbReference type="eggNOG" id="COG0198">
    <property type="taxonomic scope" value="Bacteria"/>
</dbReference>
<dbReference type="HOGENOM" id="CLU_093315_2_0_9"/>
<dbReference type="Proteomes" id="UP000000531">
    <property type="component" value="Chromosome"/>
</dbReference>
<dbReference type="GO" id="GO:1990904">
    <property type="term" value="C:ribonucleoprotein complex"/>
    <property type="evidence" value="ECO:0007669"/>
    <property type="project" value="UniProtKB-KW"/>
</dbReference>
<dbReference type="GO" id="GO:0005840">
    <property type="term" value="C:ribosome"/>
    <property type="evidence" value="ECO:0007669"/>
    <property type="project" value="UniProtKB-KW"/>
</dbReference>
<dbReference type="GO" id="GO:0019843">
    <property type="term" value="F:rRNA binding"/>
    <property type="evidence" value="ECO:0007669"/>
    <property type="project" value="UniProtKB-UniRule"/>
</dbReference>
<dbReference type="GO" id="GO:0003735">
    <property type="term" value="F:structural constituent of ribosome"/>
    <property type="evidence" value="ECO:0007669"/>
    <property type="project" value="InterPro"/>
</dbReference>
<dbReference type="GO" id="GO:0006412">
    <property type="term" value="P:translation"/>
    <property type="evidence" value="ECO:0007669"/>
    <property type="project" value="UniProtKB-UniRule"/>
</dbReference>
<dbReference type="CDD" id="cd06089">
    <property type="entry name" value="KOW_RPL26"/>
    <property type="match status" value="1"/>
</dbReference>
<dbReference type="FunFam" id="2.30.30.30:FF:000004">
    <property type="entry name" value="50S ribosomal protein L24"/>
    <property type="match status" value="1"/>
</dbReference>
<dbReference type="Gene3D" id="2.30.30.30">
    <property type="match status" value="1"/>
</dbReference>
<dbReference type="HAMAP" id="MF_01326_B">
    <property type="entry name" value="Ribosomal_uL24_B"/>
    <property type="match status" value="1"/>
</dbReference>
<dbReference type="InterPro" id="IPR005824">
    <property type="entry name" value="KOW"/>
</dbReference>
<dbReference type="InterPro" id="IPR014722">
    <property type="entry name" value="Rib_uL2_dom2"/>
</dbReference>
<dbReference type="InterPro" id="IPR003256">
    <property type="entry name" value="Ribosomal_uL24"/>
</dbReference>
<dbReference type="InterPro" id="IPR005825">
    <property type="entry name" value="Ribosomal_uL24_CS"/>
</dbReference>
<dbReference type="InterPro" id="IPR041988">
    <property type="entry name" value="Ribosomal_uL24_KOW"/>
</dbReference>
<dbReference type="InterPro" id="IPR008991">
    <property type="entry name" value="Translation_prot_SH3-like_sf"/>
</dbReference>
<dbReference type="NCBIfam" id="TIGR01079">
    <property type="entry name" value="rplX_bact"/>
    <property type="match status" value="1"/>
</dbReference>
<dbReference type="PANTHER" id="PTHR12903">
    <property type="entry name" value="MITOCHONDRIAL RIBOSOMAL PROTEIN L24"/>
    <property type="match status" value="1"/>
</dbReference>
<dbReference type="Pfam" id="PF00467">
    <property type="entry name" value="KOW"/>
    <property type="match status" value="1"/>
</dbReference>
<dbReference type="Pfam" id="PF17136">
    <property type="entry name" value="ribosomal_L24"/>
    <property type="match status" value="1"/>
</dbReference>
<dbReference type="SMART" id="SM00739">
    <property type="entry name" value="KOW"/>
    <property type="match status" value="1"/>
</dbReference>
<dbReference type="SUPFAM" id="SSF50104">
    <property type="entry name" value="Translation proteins SH3-like domain"/>
    <property type="match status" value="1"/>
</dbReference>
<dbReference type="PROSITE" id="PS01108">
    <property type="entry name" value="RIBOSOMAL_L24"/>
    <property type="match status" value="1"/>
</dbReference>
<protein>
    <recommendedName>
        <fullName evidence="1">Large ribosomal subunit protein uL24</fullName>
    </recommendedName>
    <alternativeName>
        <fullName evidence="2">50S ribosomal protein L24</fullName>
    </alternativeName>
</protein>
<proteinExistence type="inferred from homology"/>
<keyword id="KW-1185">Reference proteome</keyword>
<keyword id="KW-0687">Ribonucleoprotein</keyword>
<keyword id="KW-0689">Ribosomal protein</keyword>
<keyword id="KW-0694">RNA-binding</keyword>
<keyword id="KW-0699">rRNA-binding</keyword>
<feature type="chain" id="PRO_0000130721" description="Large ribosomal subunit protein uL24">
    <location>
        <begin position="1"/>
        <end position="105"/>
    </location>
</feature>
<reference key="1">
    <citation type="journal article" date="2005" name="J. Bacteriol.">
        <title>Insights on evolution of virulence and resistance from the complete genome analysis of an early methicillin-resistant Staphylococcus aureus strain and a biofilm-producing methicillin-resistant Staphylococcus epidermidis strain.</title>
        <authorList>
            <person name="Gill S.R."/>
            <person name="Fouts D.E."/>
            <person name="Archer G.L."/>
            <person name="Mongodin E.F."/>
            <person name="DeBoy R.T."/>
            <person name="Ravel J."/>
            <person name="Paulsen I.T."/>
            <person name="Kolonay J.F."/>
            <person name="Brinkac L.M."/>
            <person name="Beanan M.J."/>
            <person name="Dodson R.J."/>
            <person name="Daugherty S.C."/>
            <person name="Madupu R."/>
            <person name="Angiuoli S.V."/>
            <person name="Durkin A.S."/>
            <person name="Haft D.H."/>
            <person name="Vamathevan J.J."/>
            <person name="Khouri H."/>
            <person name="Utterback T.R."/>
            <person name="Lee C."/>
            <person name="Dimitrov G."/>
            <person name="Jiang L."/>
            <person name="Qin H."/>
            <person name="Weidman J."/>
            <person name="Tran K."/>
            <person name="Kang K.H."/>
            <person name="Hance I.R."/>
            <person name="Nelson K.E."/>
            <person name="Fraser C.M."/>
        </authorList>
    </citation>
    <scope>NUCLEOTIDE SEQUENCE [LARGE SCALE GENOMIC DNA]</scope>
    <source>
        <strain>ATCC 35984 / DSM 28319 / BCRC 17069 / CCUG 31568 / BM 3577 / RP62A</strain>
    </source>
</reference>
<gene>
    <name evidence="1" type="primary">rplX</name>
    <name type="ordered locus">SERP1820</name>
</gene>
<evidence type="ECO:0000255" key="1">
    <source>
        <dbReference type="HAMAP-Rule" id="MF_01326"/>
    </source>
</evidence>
<evidence type="ECO:0000305" key="2"/>